<keyword id="KW-0479">Metal-binding</keyword>
<keyword id="KW-0862">Zinc</keyword>
<gene>
    <name type="primary">YPEL3</name>
</gene>
<accession>Q65Z57</accession>
<reference key="1">
    <citation type="journal article" date="2004" name="Gene">
        <title>Identification and characterization of a novel gene family YPEL in a wide spectrum of eukaryotic species.</title>
        <authorList>
            <person name="Hosono K."/>
            <person name="Sasaki T."/>
            <person name="Minoshima S."/>
            <person name="Shimizu N."/>
        </authorList>
    </citation>
    <scope>NUCLEOTIDE SEQUENCE [MRNA]</scope>
</reference>
<dbReference type="EMBL" id="AB160979">
    <property type="protein sequence ID" value="BAD51388.1"/>
    <property type="molecule type" value="mRNA"/>
</dbReference>
<dbReference type="SMR" id="Q65Z57"/>
<dbReference type="GO" id="GO:0046872">
    <property type="term" value="F:metal ion binding"/>
    <property type="evidence" value="ECO:0007669"/>
    <property type="project" value="UniProtKB-KW"/>
</dbReference>
<dbReference type="InterPro" id="IPR034751">
    <property type="entry name" value="Yippee"/>
</dbReference>
<dbReference type="InterPro" id="IPR004910">
    <property type="entry name" value="Yippee/Mis18/Cereblon"/>
</dbReference>
<dbReference type="InterPro" id="IPR039058">
    <property type="entry name" value="Yippee_fam"/>
</dbReference>
<dbReference type="PANTHER" id="PTHR13848">
    <property type="entry name" value="PROTEIN YIPPEE-LIKE CG15309-RELATED"/>
    <property type="match status" value="1"/>
</dbReference>
<dbReference type="Pfam" id="PF03226">
    <property type="entry name" value="Yippee-Mis18"/>
    <property type="match status" value="1"/>
</dbReference>
<dbReference type="PROSITE" id="PS51792">
    <property type="entry name" value="YIPPEE"/>
    <property type="match status" value="1"/>
</dbReference>
<comment type="similarity">
    <text evidence="2">Belongs to the yippee family.</text>
</comment>
<feature type="chain" id="PRO_0000212388" description="Protein yippee-like 3">
    <location>
        <begin position="1"/>
        <end position="119"/>
    </location>
</feature>
<feature type="domain" description="Yippee" evidence="1">
    <location>
        <begin position="19"/>
        <end position="116"/>
    </location>
</feature>
<feature type="binding site" evidence="1">
    <location>
        <position position="23"/>
    </location>
    <ligand>
        <name>Zn(2+)</name>
        <dbReference type="ChEBI" id="CHEBI:29105"/>
    </ligand>
</feature>
<feature type="binding site" evidence="1">
    <location>
        <position position="26"/>
    </location>
    <ligand>
        <name>Zn(2+)</name>
        <dbReference type="ChEBI" id="CHEBI:29105"/>
    </ligand>
</feature>
<feature type="binding site" evidence="1">
    <location>
        <position position="79"/>
    </location>
    <ligand>
        <name>Zn(2+)</name>
        <dbReference type="ChEBI" id="CHEBI:29105"/>
    </ligand>
</feature>
<feature type="binding site" evidence="1">
    <location>
        <position position="82"/>
    </location>
    <ligand>
        <name>Zn(2+)</name>
        <dbReference type="ChEBI" id="CHEBI:29105"/>
    </ligand>
</feature>
<name>YPEL3_CHLAE</name>
<organism>
    <name type="scientific">Chlorocebus aethiops</name>
    <name type="common">Green monkey</name>
    <name type="synonym">Cercopithecus aethiops</name>
    <dbReference type="NCBI Taxonomy" id="9534"/>
    <lineage>
        <taxon>Eukaryota</taxon>
        <taxon>Metazoa</taxon>
        <taxon>Chordata</taxon>
        <taxon>Craniata</taxon>
        <taxon>Vertebrata</taxon>
        <taxon>Euteleostomi</taxon>
        <taxon>Mammalia</taxon>
        <taxon>Eutheria</taxon>
        <taxon>Euarchontoglires</taxon>
        <taxon>Primates</taxon>
        <taxon>Haplorrhini</taxon>
        <taxon>Catarrhini</taxon>
        <taxon>Cercopithecidae</taxon>
        <taxon>Cercopithecinae</taxon>
        <taxon>Chlorocebus</taxon>
    </lineage>
</organism>
<sequence>MVRISKPKTFQAYLDDCHRRYSCAHCRAHLANHDDLISKSFQGSQGRAYLFNSVVNVGCGPAEERVLLTGLHAVADIHCENCKTTLGWKYEQAFESSQKYKEGKYIIELNHMIKDNGWD</sequence>
<protein>
    <recommendedName>
        <fullName>Protein yippee-like 3</fullName>
    </recommendedName>
</protein>
<evidence type="ECO:0000255" key="1">
    <source>
        <dbReference type="PROSITE-ProRule" id="PRU01128"/>
    </source>
</evidence>
<evidence type="ECO:0000305" key="2"/>
<proteinExistence type="inferred from homology"/>